<accession>P49486</accession>
<organism>
    <name type="scientific">Trieres chinensis</name>
    <name type="common">Marine centric diatom</name>
    <name type="synonym">Odontella sinensis</name>
    <dbReference type="NCBI Taxonomy" id="1514140"/>
    <lineage>
        <taxon>Eukaryota</taxon>
        <taxon>Sar</taxon>
        <taxon>Stramenopiles</taxon>
        <taxon>Ochrophyta</taxon>
        <taxon>Bacillariophyta</taxon>
        <taxon>Mediophyceae</taxon>
        <taxon>Biddulphiophycidae</taxon>
        <taxon>Eupodiscales</taxon>
        <taxon>Parodontellaceae</taxon>
        <taxon>Trieres</taxon>
    </lineage>
</organism>
<protein>
    <recommendedName>
        <fullName>Photosystem I reaction center subunit XI</fullName>
    </recommendedName>
    <alternativeName>
        <fullName>PSI subunit V</fullName>
    </alternativeName>
    <alternativeName>
        <fullName>PSI-L</fullName>
    </alternativeName>
</protein>
<gene>
    <name type="primary">psaL</name>
</gene>
<comment type="subcellular location">
    <subcellularLocation>
        <location evidence="1">Plastid</location>
        <location evidence="1">Chloroplast thylakoid membrane</location>
        <topology evidence="1">Multi-pass membrane protein</topology>
    </subcellularLocation>
</comment>
<comment type="similarity">
    <text evidence="3">Belongs to the PsaL family.</text>
</comment>
<name>PSAL_TRICV</name>
<geneLocation type="chloroplast"/>
<sequence length="150" mass="15980">MANFIKPYNDDPFVGHLATPITSSSITRAILKNLPAYRFGLTPLLRGLEIGLAHGYFLMGPFVKLGPLRNSDIALFSGFLSTIGLILILTLGLTIYGVAAFGQGQTTENSNDLQTKKAWDQFKGGFFVGACGSAGFALICLSSIPAFTIS</sequence>
<dbReference type="EMBL" id="Z67753">
    <property type="protein sequence ID" value="CAA91707.1"/>
    <property type="molecule type" value="Genomic_DNA"/>
</dbReference>
<dbReference type="PIR" id="S78334">
    <property type="entry name" value="S78334"/>
</dbReference>
<dbReference type="RefSeq" id="NP_043675.1">
    <property type="nucleotide sequence ID" value="NC_001713.1"/>
</dbReference>
<dbReference type="SMR" id="P49486"/>
<dbReference type="GeneID" id="801695"/>
<dbReference type="GO" id="GO:0009535">
    <property type="term" value="C:chloroplast thylakoid membrane"/>
    <property type="evidence" value="ECO:0007669"/>
    <property type="project" value="UniProtKB-SubCell"/>
</dbReference>
<dbReference type="GO" id="GO:0009538">
    <property type="term" value="C:photosystem I reaction center"/>
    <property type="evidence" value="ECO:0007669"/>
    <property type="project" value="InterPro"/>
</dbReference>
<dbReference type="GO" id="GO:0015979">
    <property type="term" value="P:photosynthesis"/>
    <property type="evidence" value="ECO:0007669"/>
    <property type="project" value="UniProtKB-UniRule"/>
</dbReference>
<dbReference type="Gene3D" id="1.20.1240.10">
    <property type="entry name" value="Photosystem I PsaL, reaction centre subunit XI"/>
    <property type="match status" value="1"/>
</dbReference>
<dbReference type="HAMAP" id="MF_00447">
    <property type="entry name" value="PSI_PsaL"/>
    <property type="match status" value="1"/>
</dbReference>
<dbReference type="InterPro" id="IPR003757">
    <property type="entry name" value="PSI_PsaL"/>
</dbReference>
<dbReference type="InterPro" id="IPR036592">
    <property type="entry name" value="PSI_PsaL_sf"/>
</dbReference>
<dbReference type="InterPro" id="IPR022980">
    <property type="entry name" value="PSI_suXI"/>
</dbReference>
<dbReference type="PANTHER" id="PTHR34803">
    <property type="entry name" value="PHOTOSYSTEM I REACTION CENTER SUBUNIT XI, CHLOROPLASTIC"/>
    <property type="match status" value="1"/>
</dbReference>
<dbReference type="PANTHER" id="PTHR34803:SF2">
    <property type="entry name" value="PHOTOSYSTEM I REACTION CENTER SUBUNIT XI, CHLOROPLASTIC"/>
    <property type="match status" value="1"/>
</dbReference>
<dbReference type="Pfam" id="PF02605">
    <property type="entry name" value="PsaL"/>
    <property type="match status" value="1"/>
</dbReference>
<dbReference type="SUPFAM" id="SSF81568">
    <property type="entry name" value="Photosystem I reaction center subunit XI, PsaL"/>
    <property type="match status" value="1"/>
</dbReference>
<proteinExistence type="inferred from homology"/>
<keyword id="KW-0150">Chloroplast</keyword>
<keyword id="KW-0472">Membrane</keyword>
<keyword id="KW-0602">Photosynthesis</keyword>
<keyword id="KW-0603">Photosystem I</keyword>
<keyword id="KW-0934">Plastid</keyword>
<keyword id="KW-0793">Thylakoid</keyword>
<keyword id="KW-0812">Transmembrane</keyword>
<keyword id="KW-1133">Transmembrane helix</keyword>
<feature type="chain" id="PRO_0000194692" description="Photosystem I reaction center subunit XI">
    <location>
        <begin position="1"/>
        <end position="150"/>
    </location>
</feature>
<feature type="topological domain" description="Stromal" evidence="2">
    <location>
        <begin position="1"/>
        <end position="72"/>
    </location>
</feature>
<feature type="transmembrane region" description="Helical" evidence="2">
    <location>
        <begin position="73"/>
        <end position="93"/>
    </location>
</feature>
<feature type="topological domain" description="Lumenal" evidence="2">
    <location>
        <begin position="94"/>
        <end position="123"/>
    </location>
</feature>
<feature type="transmembrane region" description="Helical" evidence="2">
    <location>
        <begin position="124"/>
        <end position="144"/>
    </location>
</feature>
<feature type="topological domain" description="Stromal" evidence="2">
    <location>
        <begin position="145"/>
        <end position="150"/>
    </location>
</feature>
<reference key="1">
    <citation type="journal article" date="1995" name="Plant Mol. Biol. Rep.">
        <title>The chloroplast genome of a chlorophyll a+c-containing alga, Odontella sinensis.</title>
        <authorList>
            <person name="Kowallik K.V."/>
            <person name="Stoebe B."/>
            <person name="Schaffran I."/>
            <person name="Kroth-Pancic P."/>
            <person name="Freier U."/>
        </authorList>
    </citation>
    <scope>NUCLEOTIDE SEQUENCE [LARGE SCALE GENOMIC DNA]</scope>
</reference>
<evidence type="ECO:0000250" key="1"/>
<evidence type="ECO:0000255" key="2"/>
<evidence type="ECO:0000305" key="3"/>